<name>MAP2_PARBD</name>
<evidence type="ECO:0000255" key="1">
    <source>
        <dbReference type="HAMAP-Rule" id="MF_03175"/>
    </source>
</evidence>
<evidence type="ECO:0000256" key="2">
    <source>
        <dbReference type="SAM" id="MobiDB-lite"/>
    </source>
</evidence>
<sequence length="445" mass="48916">MAAQVASGVGNLNLNSEDGAAAKNISAQGSPENEARESDGEYDDDQGAPELGNTTAAKKKKKKTKKKKKGTSKVQTEPPRVILSSLFPNNQYPEGEIIEYQNENAYRTTNEEKRHLDRMNNDFLAEYRYAAEVHRQVRQYSQKAIKPGQTLTEIAEGIEESVRALTGYPGLEEGDNLRGGIAFPTGVNLNHCAAHYTPNAGNKMVLQYEDVMKVDFGVHINGRIVDSAFTIAFDPVYDNLLAAVKDATNTGIKQAGIDVRMSDIGAAIQEAMESYEVEIKGTSYPVKAIRNLNGHTIGRYEIHGGKNGKSVPIVKGGDQTKMEEGEVYAIETFGSTGRGYVRDDMETSHYAKIPDAPNVPLRLSSAKNLLNVITKNFGTLPFCRRYLDRLGQDKYLLGLNNLVANGIVDAYPPLCDVKGSYTAQFEHTILLRPNVKEVISRGDDY</sequence>
<protein>
    <recommendedName>
        <fullName evidence="1">Methionine aminopeptidase 2</fullName>
        <shortName evidence="1">MAP 2</shortName>
        <shortName evidence="1">MetAP 2</shortName>
        <ecNumber evidence="1">3.4.11.18</ecNumber>
    </recommendedName>
    <alternativeName>
        <fullName evidence="1">Peptidase M</fullName>
    </alternativeName>
</protein>
<feature type="chain" id="PRO_0000407661" description="Methionine aminopeptidase 2">
    <location>
        <begin position="1"/>
        <end position="445"/>
    </location>
</feature>
<feature type="region of interest" description="Disordered" evidence="2">
    <location>
        <begin position="1"/>
        <end position="80"/>
    </location>
</feature>
<feature type="compositionally biased region" description="Basic residues" evidence="2">
    <location>
        <begin position="57"/>
        <end position="71"/>
    </location>
</feature>
<feature type="binding site" evidence="1">
    <location>
        <position position="195"/>
    </location>
    <ligand>
        <name>substrate</name>
    </ligand>
</feature>
<feature type="binding site" evidence="1">
    <location>
        <position position="215"/>
    </location>
    <ligand>
        <name>a divalent metal cation</name>
        <dbReference type="ChEBI" id="CHEBI:60240"/>
        <label>1</label>
    </ligand>
</feature>
<feature type="binding site" evidence="1">
    <location>
        <position position="226"/>
    </location>
    <ligand>
        <name>a divalent metal cation</name>
        <dbReference type="ChEBI" id="CHEBI:60240"/>
        <label>1</label>
    </ligand>
</feature>
<feature type="binding site" evidence="1">
    <location>
        <position position="226"/>
    </location>
    <ligand>
        <name>a divalent metal cation</name>
        <dbReference type="ChEBI" id="CHEBI:60240"/>
        <label>2</label>
        <note>catalytic</note>
    </ligand>
</feature>
<feature type="binding site" evidence="1">
    <location>
        <position position="295"/>
    </location>
    <ligand>
        <name>a divalent metal cation</name>
        <dbReference type="ChEBI" id="CHEBI:60240"/>
        <label>2</label>
        <note>catalytic</note>
    </ligand>
</feature>
<feature type="binding site" evidence="1">
    <location>
        <position position="303"/>
    </location>
    <ligand>
        <name>substrate</name>
    </ligand>
</feature>
<feature type="binding site" evidence="1">
    <location>
        <position position="331"/>
    </location>
    <ligand>
        <name>a divalent metal cation</name>
        <dbReference type="ChEBI" id="CHEBI:60240"/>
        <label>2</label>
        <note>catalytic</note>
    </ligand>
</feature>
<feature type="binding site" evidence="1">
    <location>
        <position position="426"/>
    </location>
    <ligand>
        <name>a divalent metal cation</name>
        <dbReference type="ChEBI" id="CHEBI:60240"/>
        <label>1</label>
    </ligand>
</feature>
<feature type="binding site" evidence="1">
    <location>
        <position position="426"/>
    </location>
    <ligand>
        <name>a divalent metal cation</name>
        <dbReference type="ChEBI" id="CHEBI:60240"/>
        <label>2</label>
        <note>catalytic</note>
    </ligand>
</feature>
<proteinExistence type="inferred from homology"/>
<reference key="1">
    <citation type="journal article" date="2011" name="PLoS Genet.">
        <title>Comparative genomic analysis of human fungal pathogens causing paracoccidioidomycosis.</title>
        <authorList>
            <person name="Desjardins C.A."/>
            <person name="Champion M.D."/>
            <person name="Holder J.W."/>
            <person name="Muszewska A."/>
            <person name="Goldberg J."/>
            <person name="Bailao A.M."/>
            <person name="Brigido M.M."/>
            <person name="Ferreira M.E."/>
            <person name="Garcia A.M."/>
            <person name="Grynberg M."/>
            <person name="Gujja S."/>
            <person name="Heiman D.I."/>
            <person name="Henn M.R."/>
            <person name="Kodira C.D."/>
            <person name="Leon-Narvaez H."/>
            <person name="Longo L.V.G."/>
            <person name="Ma L.-J."/>
            <person name="Malavazi I."/>
            <person name="Matsuo A.L."/>
            <person name="Morais F.V."/>
            <person name="Pereira M."/>
            <person name="Rodriguez-Brito S."/>
            <person name="Sakthikumar S."/>
            <person name="Salem-Izacc S.M."/>
            <person name="Sykes S.M."/>
            <person name="Teixeira M.M."/>
            <person name="Vallejo M.C."/>
            <person name="Walter M.E."/>
            <person name="Yandava C."/>
            <person name="Young S."/>
            <person name="Zeng Q."/>
            <person name="Zucker J."/>
            <person name="Felipe M.S."/>
            <person name="Goldman G.H."/>
            <person name="Haas B.J."/>
            <person name="McEwen J.G."/>
            <person name="Nino-Vega G."/>
            <person name="Puccia R."/>
            <person name="San-Blas G."/>
            <person name="Soares C.M."/>
            <person name="Birren B.W."/>
            <person name="Cuomo C.A."/>
        </authorList>
    </citation>
    <scope>NUCLEOTIDE SEQUENCE [LARGE SCALE GENOMIC DNA]</scope>
    <source>
        <strain>Pb18</strain>
    </source>
</reference>
<comment type="function">
    <text evidence="1">Cotranslationally removes the N-terminal methionine from nascent proteins. The N-terminal methionine is often cleaved when the second residue in the primary sequence is small and uncharged (Met-Ala-, Cys, Gly, Pro, Ser, Thr, or Val).</text>
</comment>
<comment type="catalytic activity">
    <reaction evidence="1">
        <text>Release of N-terminal amino acids, preferentially methionine, from peptides and arylamides.</text>
        <dbReference type="EC" id="3.4.11.18"/>
    </reaction>
</comment>
<comment type="cofactor">
    <cofactor evidence="1">
        <name>Co(2+)</name>
        <dbReference type="ChEBI" id="CHEBI:48828"/>
    </cofactor>
    <cofactor evidence="1">
        <name>Zn(2+)</name>
        <dbReference type="ChEBI" id="CHEBI:29105"/>
    </cofactor>
    <cofactor evidence="1">
        <name>Mn(2+)</name>
        <dbReference type="ChEBI" id="CHEBI:29035"/>
    </cofactor>
    <cofactor evidence="1">
        <name>Fe(2+)</name>
        <dbReference type="ChEBI" id="CHEBI:29033"/>
    </cofactor>
    <text evidence="1">Binds 2 divalent metal cations per subunit. Has a high-affinity and a low affinity metal-binding site. The true nature of the physiological cofactor is under debate. The enzyme is active with cobalt, zinc, manganese or divalent iron ions. Most likely, methionine aminopeptidases function as mononuclear Fe(2+)-metalloproteases under physiological conditions, and the catalytically relevant metal-binding site has been assigned to the histidine-containing high-affinity site.</text>
</comment>
<comment type="subcellular location">
    <subcellularLocation>
        <location evidence="1">Cytoplasm</location>
    </subcellularLocation>
</comment>
<comment type="similarity">
    <text evidence="1">Belongs to the peptidase M24A family. Methionine aminopeptidase eukaryotic type 2 subfamily.</text>
</comment>
<organism>
    <name type="scientific">Paracoccidioides brasiliensis (strain Pb18)</name>
    <dbReference type="NCBI Taxonomy" id="502780"/>
    <lineage>
        <taxon>Eukaryota</taxon>
        <taxon>Fungi</taxon>
        <taxon>Dikarya</taxon>
        <taxon>Ascomycota</taxon>
        <taxon>Pezizomycotina</taxon>
        <taxon>Eurotiomycetes</taxon>
        <taxon>Eurotiomycetidae</taxon>
        <taxon>Onygenales</taxon>
        <taxon>Ajellomycetaceae</taxon>
        <taxon>Paracoccidioides</taxon>
    </lineage>
</organism>
<keyword id="KW-0031">Aminopeptidase</keyword>
<keyword id="KW-0963">Cytoplasm</keyword>
<keyword id="KW-0378">Hydrolase</keyword>
<keyword id="KW-0479">Metal-binding</keyword>
<keyword id="KW-0645">Protease</keyword>
<keyword id="KW-1185">Reference proteome</keyword>
<dbReference type="EC" id="3.4.11.18" evidence="1"/>
<dbReference type="EMBL" id="KN275971">
    <property type="protein sequence ID" value="EEH43339.1"/>
    <property type="molecule type" value="Genomic_DNA"/>
</dbReference>
<dbReference type="RefSeq" id="XP_010763549.1">
    <property type="nucleotide sequence ID" value="XM_010765247.1"/>
</dbReference>
<dbReference type="SMR" id="C1GLM4"/>
<dbReference type="FunCoup" id="C1GLM4">
    <property type="interactions" value="1118"/>
</dbReference>
<dbReference type="STRING" id="502780.C1GLM4"/>
<dbReference type="GeneID" id="22586591"/>
<dbReference type="KEGG" id="pbn:PADG_08265"/>
<dbReference type="VEuPathDB" id="FungiDB:PADG_08265"/>
<dbReference type="eggNOG" id="KOG2775">
    <property type="taxonomic scope" value="Eukaryota"/>
</dbReference>
<dbReference type="HOGENOM" id="CLU_015857_7_1_1"/>
<dbReference type="InParanoid" id="C1GLM4"/>
<dbReference type="OMA" id="PFAKRWL"/>
<dbReference type="OrthoDB" id="31552at33183"/>
<dbReference type="Proteomes" id="UP000001628">
    <property type="component" value="Unassembled WGS sequence"/>
</dbReference>
<dbReference type="GO" id="GO:0005737">
    <property type="term" value="C:cytoplasm"/>
    <property type="evidence" value="ECO:0007669"/>
    <property type="project" value="UniProtKB-SubCell"/>
</dbReference>
<dbReference type="GO" id="GO:0004239">
    <property type="term" value="F:initiator methionyl aminopeptidase activity"/>
    <property type="evidence" value="ECO:0007669"/>
    <property type="project" value="UniProtKB-UniRule"/>
</dbReference>
<dbReference type="GO" id="GO:0046872">
    <property type="term" value="F:metal ion binding"/>
    <property type="evidence" value="ECO:0007669"/>
    <property type="project" value="UniProtKB-UniRule"/>
</dbReference>
<dbReference type="GO" id="GO:0070006">
    <property type="term" value="F:metalloaminopeptidase activity"/>
    <property type="evidence" value="ECO:0007669"/>
    <property type="project" value="UniProtKB-UniRule"/>
</dbReference>
<dbReference type="GO" id="GO:0006508">
    <property type="term" value="P:proteolysis"/>
    <property type="evidence" value="ECO:0007669"/>
    <property type="project" value="UniProtKB-KW"/>
</dbReference>
<dbReference type="CDD" id="cd01088">
    <property type="entry name" value="MetAP2"/>
    <property type="match status" value="1"/>
</dbReference>
<dbReference type="Gene3D" id="3.90.230.10">
    <property type="entry name" value="Creatinase/methionine aminopeptidase superfamily"/>
    <property type="match status" value="1"/>
</dbReference>
<dbReference type="Gene3D" id="1.10.10.10">
    <property type="entry name" value="Winged helix-like DNA-binding domain superfamily/Winged helix DNA-binding domain"/>
    <property type="match status" value="1"/>
</dbReference>
<dbReference type="HAMAP" id="MF_03175">
    <property type="entry name" value="MetAP_2_euk"/>
    <property type="match status" value="1"/>
</dbReference>
<dbReference type="InterPro" id="IPR036005">
    <property type="entry name" value="Creatinase/aminopeptidase-like"/>
</dbReference>
<dbReference type="InterPro" id="IPR050247">
    <property type="entry name" value="Met_Aminopeptidase_Type2"/>
</dbReference>
<dbReference type="InterPro" id="IPR000994">
    <property type="entry name" value="Pept_M24"/>
</dbReference>
<dbReference type="InterPro" id="IPR001714">
    <property type="entry name" value="Pept_M24_MAP"/>
</dbReference>
<dbReference type="InterPro" id="IPR002468">
    <property type="entry name" value="Pept_M24A_MAP2"/>
</dbReference>
<dbReference type="InterPro" id="IPR018349">
    <property type="entry name" value="Pept_M24A_MAP2_BS"/>
</dbReference>
<dbReference type="InterPro" id="IPR036388">
    <property type="entry name" value="WH-like_DNA-bd_sf"/>
</dbReference>
<dbReference type="InterPro" id="IPR036390">
    <property type="entry name" value="WH_DNA-bd_sf"/>
</dbReference>
<dbReference type="NCBIfam" id="TIGR00501">
    <property type="entry name" value="met_pdase_II"/>
    <property type="match status" value="1"/>
</dbReference>
<dbReference type="PANTHER" id="PTHR45777">
    <property type="entry name" value="METHIONINE AMINOPEPTIDASE 2"/>
    <property type="match status" value="1"/>
</dbReference>
<dbReference type="PANTHER" id="PTHR45777:SF2">
    <property type="entry name" value="METHIONINE AMINOPEPTIDASE 2"/>
    <property type="match status" value="1"/>
</dbReference>
<dbReference type="Pfam" id="PF00557">
    <property type="entry name" value="Peptidase_M24"/>
    <property type="match status" value="1"/>
</dbReference>
<dbReference type="PRINTS" id="PR00599">
    <property type="entry name" value="MAPEPTIDASE"/>
</dbReference>
<dbReference type="SUPFAM" id="SSF55920">
    <property type="entry name" value="Creatinase/aminopeptidase"/>
    <property type="match status" value="1"/>
</dbReference>
<dbReference type="SUPFAM" id="SSF46785">
    <property type="entry name" value="Winged helix' DNA-binding domain"/>
    <property type="match status" value="1"/>
</dbReference>
<dbReference type="PROSITE" id="PS01202">
    <property type="entry name" value="MAP_2"/>
    <property type="match status" value="1"/>
</dbReference>
<accession>C1GLM4</accession>
<gene>
    <name type="ORF">PADG_08265</name>
</gene>